<reference key="1">
    <citation type="journal article" date="2000" name="Proc. Natl. Acad. Sci. U.S.A.">
        <title>Hox cluster genomics in the horn shark, Heterodontus francisci.</title>
        <authorList>
            <person name="Kim C.B."/>
            <person name="Amemiya C."/>
            <person name="Bailey W."/>
            <person name="Kawasaki K."/>
            <person name="Mezey J."/>
            <person name="Miller W."/>
            <person name="Minoshima S."/>
            <person name="Shimizu N."/>
            <person name="Wagner G."/>
            <person name="Ruddle F."/>
        </authorList>
    </citation>
    <scope>NUCLEOTIDE SEQUENCE [GENOMIC DNA]</scope>
</reference>
<keyword id="KW-0217">Developmental protein</keyword>
<keyword id="KW-0238">DNA-binding</keyword>
<keyword id="KW-0371">Homeobox</keyword>
<keyword id="KW-0539">Nucleus</keyword>
<keyword id="KW-0804">Transcription</keyword>
<keyword id="KW-0805">Transcription regulation</keyword>
<accession>Q9IA17</accession>
<protein>
    <recommendedName>
        <fullName>Homeobox protein Hox-D13</fullName>
    </recommendedName>
</protein>
<name>HXD13_HETFR</name>
<dbReference type="EMBL" id="AF224263">
    <property type="protein sequence ID" value="AAF44637.1"/>
    <property type="molecule type" value="Genomic_DNA"/>
</dbReference>
<dbReference type="SMR" id="Q9IA17"/>
<dbReference type="GO" id="GO:0005634">
    <property type="term" value="C:nucleus"/>
    <property type="evidence" value="ECO:0007669"/>
    <property type="project" value="UniProtKB-SubCell"/>
</dbReference>
<dbReference type="GO" id="GO:0003677">
    <property type="term" value="F:DNA binding"/>
    <property type="evidence" value="ECO:0007669"/>
    <property type="project" value="UniProtKB-KW"/>
</dbReference>
<dbReference type="GO" id="GO:0001228">
    <property type="term" value="F:DNA-binding transcription activator activity, RNA polymerase II-specific"/>
    <property type="evidence" value="ECO:0000250"/>
    <property type="project" value="UniProtKB"/>
</dbReference>
<dbReference type="GO" id="GO:0003700">
    <property type="term" value="F:DNA-binding transcription factor activity"/>
    <property type="evidence" value="ECO:0000250"/>
    <property type="project" value="UniProtKB"/>
</dbReference>
<dbReference type="GO" id="GO:0045944">
    <property type="term" value="P:positive regulation of transcription by RNA polymerase II"/>
    <property type="evidence" value="ECO:0000250"/>
    <property type="project" value="UniProtKB"/>
</dbReference>
<dbReference type="CDD" id="cd00086">
    <property type="entry name" value="homeodomain"/>
    <property type="match status" value="1"/>
</dbReference>
<dbReference type="FunFam" id="1.10.10.60:FF:000084">
    <property type="entry name" value="Homeobox protein Hox-D13"/>
    <property type="match status" value="1"/>
</dbReference>
<dbReference type="Gene3D" id="1.10.10.60">
    <property type="entry name" value="Homeodomain-like"/>
    <property type="match status" value="1"/>
</dbReference>
<dbReference type="InterPro" id="IPR051003">
    <property type="entry name" value="AP_axis_regulatory_Homeobox"/>
</dbReference>
<dbReference type="InterPro" id="IPR001356">
    <property type="entry name" value="HD"/>
</dbReference>
<dbReference type="InterPro" id="IPR017970">
    <property type="entry name" value="Homeobox_CS"/>
</dbReference>
<dbReference type="InterPro" id="IPR009057">
    <property type="entry name" value="Homeodomain-like_sf"/>
</dbReference>
<dbReference type="InterPro" id="IPR022067">
    <property type="entry name" value="HoxA13_N"/>
</dbReference>
<dbReference type="PANTHER" id="PTHR45804:SF4">
    <property type="entry name" value="HOMEOBOX PROTEIN HOX-D13"/>
    <property type="match status" value="1"/>
</dbReference>
<dbReference type="PANTHER" id="PTHR45804">
    <property type="entry name" value="SEGMENTATION PROTEIN FUSHI TARAZU-LIKE PROTEIN"/>
    <property type="match status" value="1"/>
</dbReference>
<dbReference type="Pfam" id="PF00046">
    <property type="entry name" value="Homeodomain"/>
    <property type="match status" value="1"/>
</dbReference>
<dbReference type="Pfam" id="PF12284">
    <property type="entry name" value="HoxA13_N"/>
    <property type="match status" value="1"/>
</dbReference>
<dbReference type="SMART" id="SM00389">
    <property type="entry name" value="HOX"/>
    <property type="match status" value="1"/>
</dbReference>
<dbReference type="SUPFAM" id="SSF46689">
    <property type="entry name" value="Homeodomain-like"/>
    <property type="match status" value="1"/>
</dbReference>
<dbReference type="PROSITE" id="PS00027">
    <property type="entry name" value="HOMEOBOX_1"/>
    <property type="match status" value="1"/>
</dbReference>
<dbReference type="PROSITE" id="PS50071">
    <property type="entry name" value="HOMEOBOX_2"/>
    <property type="match status" value="1"/>
</dbReference>
<comment type="function">
    <text evidence="1">Sequence-specific transcription factor that binds gene promoters and activates their transcription. Part of a developmental regulatory system that provides cells with specific positional identities on the anterior-posterior axis.</text>
</comment>
<comment type="subcellular location">
    <subcellularLocation>
        <location evidence="2">Nucleus</location>
    </subcellularLocation>
</comment>
<comment type="similarity">
    <text evidence="4">Belongs to the Abd-B homeobox family.</text>
</comment>
<evidence type="ECO:0000250" key="1">
    <source>
        <dbReference type="UniProtKB" id="P35453"/>
    </source>
</evidence>
<evidence type="ECO:0000250" key="2">
    <source>
        <dbReference type="UniProtKB" id="P70217"/>
    </source>
</evidence>
<evidence type="ECO:0000255" key="3">
    <source>
        <dbReference type="PROSITE-ProRule" id="PRU00108"/>
    </source>
</evidence>
<evidence type="ECO:0000305" key="4"/>
<gene>
    <name type="primary">HOXD13</name>
</gene>
<sequence>MEGLGGNVPSNQCRNFLSPSAFGAHHNSLSSGPAYTVGDRTHSVISESAKQCSPCPAPTSPPNPAISYGYHFGSSYYSCRNVGIQQTGLKSGAHASLAGYPVDKYMDVSSLTNTPVPTDEVSARAKEFAFYQSYPNPYQRVSGYLDVPVVPTISGHGEPRHEALISMEGYQPWTFANSWNGQVYCPKDQTQTPHFWKSPLSGDVMHNQTDINIYRRGRKKRVPYTKTQLKELEREYATNKFITKEKRRRISTATNLTERQVTIWFQNRRVKEKKVVSKVKENIP</sequence>
<proteinExistence type="inferred from homology"/>
<organism>
    <name type="scientific">Heterodontus francisci</name>
    <name type="common">Horn shark</name>
    <name type="synonym">Cestracion francisci</name>
    <dbReference type="NCBI Taxonomy" id="7792"/>
    <lineage>
        <taxon>Eukaryota</taxon>
        <taxon>Metazoa</taxon>
        <taxon>Chordata</taxon>
        <taxon>Craniata</taxon>
        <taxon>Vertebrata</taxon>
        <taxon>Chondrichthyes</taxon>
        <taxon>Elasmobranchii</taxon>
        <taxon>Galeomorphii</taxon>
        <taxon>Heterodontoidea</taxon>
        <taxon>Heterodontiformes</taxon>
        <taxon>Heterodontidae</taxon>
        <taxon>Heterodontus</taxon>
    </lineage>
</organism>
<feature type="chain" id="PRO_0000200248" description="Homeobox protein Hox-D13">
    <location>
        <begin position="1"/>
        <end position="284"/>
    </location>
</feature>
<feature type="DNA-binding region" description="Homeobox" evidence="3">
    <location>
        <begin position="217"/>
        <end position="276"/>
    </location>
</feature>